<proteinExistence type="evidence at transcript level"/>
<sequence length="571" mass="63700">MQMEANDCQEEHKFTLDNYHVVEQVRRGKSSSDFVVLHDIEDKKYAMKKICLAKHTDKLKQTALQEMKLLSSLKNPYIVHYEDSWIDNDNNACIFTAYYEGGNMANAIKKARGKLFPEERIFKWLAQLLLAVNYLHSNRVVHMDLTCSNIFLPKDDHVQLGNYGLAKLINPEKPVSMVSGISNSMCPEVLEDQPYGYKSDIWSLGCCMYEITAHQPAFKAPDMAGLINKINRSLMSPLPIVYSSTLKQMIKLMLRKKPEYRPTACELLRNPSLQPYLLQCQNLSPIYLPVFPIKPVNSPKDKARRNSLPGKFGKERVSREKSEVSRSLENLYPFWTNTETGSSSSSQPASSTNGAEDKLETKRIDPSCDTLKISEFTSQKSDESLIDPDIAVYSTETPAEENALPKETENIFSEESQLRDVDVGVVSAQEVACSPPRAIEEAETQEALPKPKEQITVPISSVAHSSTEVAAAKDHLSGSLEGDKAKMVKLTASEMSSVLSKLTKLGPPQSKERADALECLLEKCAGLVKQEKYEELAGLLTPFGEDGVSARDTAIWFAKTLLSSDKLNQGT</sequence>
<keyword id="KW-0025">Alternative splicing</keyword>
<keyword id="KW-0067">ATP-binding</keyword>
<keyword id="KW-0418">Kinase</keyword>
<keyword id="KW-0547">Nucleotide-binding</keyword>
<keyword id="KW-1185">Reference proteome</keyword>
<keyword id="KW-0723">Serine/threonine-protein kinase</keyword>
<keyword id="KW-0808">Transferase</keyword>
<dbReference type="EC" id="2.7.11.34"/>
<dbReference type="EMBL" id="AC069472">
    <property type="protein sequence ID" value="AAG51063.1"/>
    <property type="molecule type" value="Genomic_DNA"/>
</dbReference>
<dbReference type="EMBL" id="AP002047">
    <property type="protein sequence ID" value="BAB03128.1"/>
    <property type="molecule type" value="Genomic_DNA"/>
</dbReference>
<dbReference type="EMBL" id="CP002686">
    <property type="protein sequence ID" value="AEE75164.1"/>
    <property type="molecule type" value="Genomic_DNA"/>
</dbReference>
<dbReference type="EMBL" id="AY062450">
    <property type="protein sequence ID" value="AAL32528.1"/>
    <property type="molecule type" value="mRNA"/>
</dbReference>
<dbReference type="EMBL" id="BT015419">
    <property type="protein sequence ID" value="AAU05542.1"/>
    <property type="molecule type" value="mRNA"/>
</dbReference>
<dbReference type="RefSeq" id="NP_187827.1">
    <molecule id="Q9LHI7-1"/>
    <property type="nucleotide sequence ID" value="NM_112055.5"/>
</dbReference>
<dbReference type="SMR" id="Q9LHI7"/>
<dbReference type="BioGRID" id="5731">
    <property type="interactions" value="7"/>
</dbReference>
<dbReference type="FunCoup" id="Q9LHI7">
    <property type="interactions" value="1917"/>
</dbReference>
<dbReference type="IntAct" id="Q9LHI7">
    <property type="interactions" value="8"/>
</dbReference>
<dbReference type="STRING" id="3702.Q9LHI7"/>
<dbReference type="iPTMnet" id="Q9LHI7"/>
<dbReference type="PaxDb" id="3702-AT3G12200.2"/>
<dbReference type="EnsemblPlants" id="AT3G12200.1">
    <molecule id="Q9LHI7-1"/>
    <property type="protein sequence ID" value="AT3G12200.1"/>
    <property type="gene ID" value="AT3G12200"/>
</dbReference>
<dbReference type="GeneID" id="820397"/>
<dbReference type="Gramene" id="AT3G12200.1">
    <molecule id="Q9LHI7-1"/>
    <property type="protein sequence ID" value="AT3G12200.1"/>
    <property type="gene ID" value="AT3G12200"/>
</dbReference>
<dbReference type="KEGG" id="ath:AT3G12200"/>
<dbReference type="Araport" id="AT3G12200"/>
<dbReference type="TAIR" id="AT3G12200">
    <property type="gene designation" value="NEK7"/>
</dbReference>
<dbReference type="eggNOG" id="KOG0589">
    <property type="taxonomic scope" value="Eukaryota"/>
</dbReference>
<dbReference type="InParanoid" id="Q9LHI7"/>
<dbReference type="OMA" id="HKVEHIS"/>
<dbReference type="PhylomeDB" id="Q9LHI7"/>
<dbReference type="PRO" id="PR:Q9LHI7"/>
<dbReference type="Proteomes" id="UP000006548">
    <property type="component" value="Chromosome 3"/>
</dbReference>
<dbReference type="ExpressionAtlas" id="Q9LHI7">
    <property type="expression patterns" value="baseline and differential"/>
</dbReference>
<dbReference type="GO" id="GO:0005524">
    <property type="term" value="F:ATP binding"/>
    <property type="evidence" value="ECO:0007669"/>
    <property type="project" value="UniProtKB-KW"/>
</dbReference>
<dbReference type="GO" id="GO:0106310">
    <property type="term" value="F:protein serine kinase activity"/>
    <property type="evidence" value="ECO:0007669"/>
    <property type="project" value="RHEA"/>
</dbReference>
<dbReference type="GO" id="GO:0004674">
    <property type="term" value="F:protein serine/threonine kinase activity"/>
    <property type="evidence" value="ECO:0007669"/>
    <property type="project" value="UniProtKB-KW"/>
</dbReference>
<dbReference type="FunFam" id="3.30.200.20:FF:001218">
    <property type="entry name" value="Serine/threonine-protein kinase Nek7"/>
    <property type="match status" value="1"/>
</dbReference>
<dbReference type="Gene3D" id="3.30.200.20">
    <property type="entry name" value="Phosphorylase Kinase, domain 1"/>
    <property type="match status" value="1"/>
</dbReference>
<dbReference type="Gene3D" id="1.10.510.10">
    <property type="entry name" value="Transferase(Phosphotransferase) domain 1"/>
    <property type="match status" value="1"/>
</dbReference>
<dbReference type="InterPro" id="IPR011009">
    <property type="entry name" value="Kinase-like_dom_sf"/>
</dbReference>
<dbReference type="InterPro" id="IPR050660">
    <property type="entry name" value="NEK_Ser/Thr_kinase"/>
</dbReference>
<dbReference type="InterPro" id="IPR000719">
    <property type="entry name" value="Prot_kinase_dom"/>
</dbReference>
<dbReference type="InterPro" id="IPR008266">
    <property type="entry name" value="Tyr_kinase_AS"/>
</dbReference>
<dbReference type="PANTHER" id="PTHR43671">
    <property type="entry name" value="SERINE/THREONINE-PROTEIN KINASE NEK"/>
    <property type="match status" value="1"/>
</dbReference>
<dbReference type="PANTHER" id="PTHR43671:SF76">
    <property type="entry name" value="SERINE_THREONINE-PROTEIN KINASE NEK7"/>
    <property type="match status" value="1"/>
</dbReference>
<dbReference type="Pfam" id="PF00069">
    <property type="entry name" value="Pkinase"/>
    <property type="match status" value="1"/>
</dbReference>
<dbReference type="SUPFAM" id="SSF56112">
    <property type="entry name" value="Protein kinase-like (PK-like)"/>
    <property type="match status" value="1"/>
</dbReference>
<dbReference type="PROSITE" id="PS50011">
    <property type="entry name" value="PROTEIN_KINASE_DOM"/>
    <property type="match status" value="1"/>
</dbReference>
<dbReference type="PROSITE" id="PS00109">
    <property type="entry name" value="PROTEIN_KINASE_TYR"/>
    <property type="match status" value="1"/>
</dbReference>
<name>NEK7_ARATH</name>
<reference key="1">
    <citation type="journal article" date="2000" name="Nature">
        <title>Sequence and analysis of chromosome 3 of the plant Arabidopsis thaliana.</title>
        <authorList>
            <person name="Salanoubat M."/>
            <person name="Lemcke K."/>
            <person name="Rieger M."/>
            <person name="Ansorge W."/>
            <person name="Unseld M."/>
            <person name="Fartmann B."/>
            <person name="Valle G."/>
            <person name="Bloecker H."/>
            <person name="Perez-Alonso M."/>
            <person name="Obermaier B."/>
            <person name="Delseny M."/>
            <person name="Boutry M."/>
            <person name="Grivell L.A."/>
            <person name="Mache R."/>
            <person name="Puigdomenech P."/>
            <person name="De Simone V."/>
            <person name="Choisne N."/>
            <person name="Artiguenave F."/>
            <person name="Robert C."/>
            <person name="Brottier P."/>
            <person name="Wincker P."/>
            <person name="Cattolico L."/>
            <person name="Weissenbach J."/>
            <person name="Saurin W."/>
            <person name="Quetier F."/>
            <person name="Schaefer M."/>
            <person name="Mueller-Auer S."/>
            <person name="Gabel C."/>
            <person name="Fuchs M."/>
            <person name="Benes V."/>
            <person name="Wurmbach E."/>
            <person name="Drzonek H."/>
            <person name="Erfle H."/>
            <person name="Jordan N."/>
            <person name="Bangert S."/>
            <person name="Wiedelmann R."/>
            <person name="Kranz H."/>
            <person name="Voss H."/>
            <person name="Holland R."/>
            <person name="Brandt P."/>
            <person name="Nyakatura G."/>
            <person name="Vezzi A."/>
            <person name="D'Angelo M."/>
            <person name="Pallavicini A."/>
            <person name="Toppo S."/>
            <person name="Simionati B."/>
            <person name="Conrad A."/>
            <person name="Hornischer K."/>
            <person name="Kauer G."/>
            <person name="Loehnert T.-H."/>
            <person name="Nordsiek G."/>
            <person name="Reichelt J."/>
            <person name="Scharfe M."/>
            <person name="Schoen O."/>
            <person name="Bargues M."/>
            <person name="Terol J."/>
            <person name="Climent J."/>
            <person name="Navarro P."/>
            <person name="Collado C."/>
            <person name="Perez-Perez A."/>
            <person name="Ottenwaelder B."/>
            <person name="Duchemin D."/>
            <person name="Cooke R."/>
            <person name="Laudie M."/>
            <person name="Berger-Llauro C."/>
            <person name="Purnelle B."/>
            <person name="Masuy D."/>
            <person name="de Haan M."/>
            <person name="Maarse A.C."/>
            <person name="Alcaraz J.-P."/>
            <person name="Cottet A."/>
            <person name="Casacuberta E."/>
            <person name="Monfort A."/>
            <person name="Argiriou A."/>
            <person name="Flores M."/>
            <person name="Liguori R."/>
            <person name="Vitale D."/>
            <person name="Mannhaupt G."/>
            <person name="Haase D."/>
            <person name="Schoof H."/>
            <person name="Rudd S."/>
            <person name="Zaccaria P."/>
            <person name="Mewes H.-W."/>
            <person name="Mayer K.F.X."/>
            <person name="Kaul S."/>
            <person name="Town C.D."/>
            <person name="Koo H.L."/>
            <person name="Tallon L.J."/>
            <person name="Jenkins J."/>
            <person name="Rooney T."/>
            <person name="Rizzo M."/>
            <person name="Walts A."/>
            <person name="Utterback T."/>
            <person name="Fujii C.Y."/>
            <person name="Shea T.P."/>
            <person name="Creasy T.H."/>
            <person name="Haas B."/>
            <person name="Maiti R."/>
            <person name="Wu D."/>
            <person name="Peterson J."/>
            <person name="Van Aken S."/>
            <person name="Pai G."/>
            <person name="Militscher J."/>
            <person name="Sellers P."/>
            <person name="Gill J.E."/>
            <person name="Feldblyum T.V."/>
            <person name="Preuss D."/>
            <person name="Lin X."/>
            <person name="Nierman W.C."/>
            <person name="Salzberg S.L."/>
            <person name="White O."/>
            <person name="Venter J.C."/>
            <person name="Fraser C.M."/>
            <person name="Kaneko T."/>
            <person name="Nakamura Y."/>
            <person name="Sato S."/>
            <person name="Kato T."/>
            <person name="Asamizu E."/>
            <person name="Sasamoto S."/>
            <person name="Kimura T."/>
            <person name="Idesawa K."/>
            <person name="Kawashima K."/>
            <person name="Kishida Y."/>
            <person name="Kiyokawa C."/>
            <person name="Kohara M."/>
            <person name="Matsumoto M."/>
            <person name="Matsuno A."/>
            <person name="Muraki A."/>
            <person name="Nakayama S."/>
            <person name="Nakazaki N."/>
            <person name="Shinpo S."/>
            <person name="Takeuchi C."/>
            <person name="Wada T."/>
            <person name="Watanabe A."/>
            <person name="Yamada M."/>
            <person name="Yasuda M."/>
            <person name="Tabata S."/>
        </authorList>
    </citation>
    <scope>NUCLEOTIDE SEQUENCE [LARGE SCALE GENOMIC DNA]</scope>
    <source>
        <strain>cv. Columbia</strain>
    </source>
</reference>
<reference key="2">
    <citation type="journal article" date="2000" name="DNA Res.">
        <title>Structural analysis of Arabidopsis thaliana chromosome 3. II. Sequence features of the 4,251,695 bp regions covered by 90 P1, TAC and BAC clones.</title>
        <authorList>
            <person name="Kaneko T."/>
            <person name="Katoh T."/>
            <person name="Sato S."/>
            <person name="Nakamura Y."/>
            <person name="Asamizu E."/>
            <person name="Tabata S."/>
        </authorList>
    </citation>
    <scope>NUCLEOTIDE SEQUENCE [LARGE SCALE GENOMIC DNA]</scope>
    <source>
        <strain>cv. Columbia</strain>
    </source>
</reference>
<reference key="3">
    <citation type="journal article" date="2017" name="Plant J.">
        <title>Araport11: a complete reannotation of the Arabidopsis thaliana reference genome.</title>
        <authorList>
            <person name="Cheng C.Y."/>
            <person name="Krishnakumar V."/>
            <person name="Chan A.P."/>
            <person name="Thibaud-Nissen F."/>
            <person name="Schobel S."/>
            <person name="Town C.D."/>
        </authorList>
    </citation>
    <scope>GENOME REANNOTATION</scope>
    <source>
        <strain>cv. Columbia</strain>
    </source>
</reference>
<reference key="4">
    <citation type="journal article" date="2003" name="Science">
        <title>Empirical analysis of transcriptional activity in the Arabidopsis genome.</title>
        <authorList>
            <person name="Yamada K."/>
            <person name="Lim J."/>
            <person name="Dale J.M."/>
            <person name="Chen H."/>
            <person name="Shinn P."/>
            <person name="Palm C.J."/>
            <person name="Southwick A.M."/>
            <person name="Wu H.C."/>
            <person name="Kim C.J."/>
            <person name="Nguyen M."/>
            <person name="Pham P.K."/>
            <person name="Cheuk R.F."/>
            <person name="Karlin-Newmann G."/>
            <person name="Liu S.X."/>
            <person name="Lam B."/>
            <person name="Sakano H."/>
            <person name="Wu T."/>
            <person name="Yu G."/>
            <person name="Miranda M."/>
            <person name="Quach H.L."/>
            <person name="Tripp M."/>
            <person name="Chang C.H."/>
            <person name="Lee J.M."/>
            <person name="Toriumi M.J."/>
            <person name="Chan M.M."/>
            <person name="Tang C.C."/>
            <person name="Onodera C.S."/>
            <person name="Deng J.M."/>
            <person name="Akiyama K."/>
            <person name="Ansari Y."/>
            <person name="Arakawa T."/>
            <person name="Banh J."/>
            <person name="Banno F."/>
            <person name="Bowser L."/>
            <person name="Brooks S.Y."/>
            <person name="Carninci P."/>
            <person name="Chao Q."/>
            <person name="Choy N."/>
            <person name="Enju A."/>
            <person name="Goldsmith A.D."/>
            <person name="Gurjal M."/>
            <person name="Hansen N.F."/>
            <person name="Hayashizaki Y."/>
            <person name="Johnson-Hopson C."/>
            <person name="Hsuan V.W."/>
            <person name="Iida K."/>
            <person name="Karnes M."/>
            <person name="Khan S."/>
            <person name="Koesema E."/>
            <person name="Ishida J."/>
            <person name="Jiang P.X."/>
            <person name="Jones T."/>
            <person name="Kawai J."/>
            <person name="Kamiya A."/>
            <person name="Meyers C."/>
            <person name="Nakajima M."/>
            <person name="Narusaka M."/>
            <person name="Seki M."/>
            <person name="Sakurai T."/>
            <person name="Satou M."/>
            <person name="Tamse R."/>
            <person name="Vaysberg M."/>
            <person name="Wallender E.K."/>
            <person name="Wong C."/>
            <person name="Yamamura Y."/>
            <person name="Yuan S."/>
            <person name="Shinozaki K."/>
            <person name="Davis R.W."/>
            <person name="Theologis A."/>
            <person name="Ecker J.R."/>
        </authorList>
    </citation>
    <scope>NUCLEOTIDE SEQUENCE [LARGE SCALE MRNA]</scope>
    <source>
        <strain>cv. Columbia</strain>
    </source>
</reference>
<reference key="5">
    <citation type="submission" date="2004-08" db="EMBL/GenBank/DDBJ databases">
        <title>Arabidopsis ORF clones.</title>
        <authorList>
            <person name="Cheuk R.F."/>
            <person name="Chen H."/>
            <person name="Kim C.J."/>
            <person name="Shinn P."/>
            <person name="Ecker J.R."/>
        </authorList>
    </citation>
    <scope>NUCLEOTIDE SEQUENCE [LARGE SCALE MRNA]</scope>
    <source>
        <strain>cv. Columbia</strain>
    </source>
</reference>
<reference key="6">
    <citation type="journal article" date="2007" name="Plant J.">
        <title>Members of the plant NIMA-related kinases are involved in organ development and vascularization in poplar, Arabidopsis and rice.</title>
        <authorList>
            <person name="Vigneault F."/>
            <person name="Lachance D."/>
            <person name="Cloutier M."/>
            <person name="Pelletier G."/>
            <person name="Levasseur C."/>
            <person name="Seguin A."/>
        </authorList>
    </citation>
    <scope>GENE FAMILY</scope>
    <scope>NOMENCLATURE</scope>
</reference>
<feature type="chain" id="PRO_0000314043" description="Serine/threonine-protein kinase Nek7">
    <location>
        <begin position="1"/>
        <end position="571"/>
    </location>
</feature>
<feature type="domain" description="Protein kinase" evidence="1">
    <location>
        <begin position="19"/>
        <end position="277"/>
    </location>
</feature>
<feature type="region of interest" description="Disordered" evidence="3">
    <location>
        <begin position="298"/>
        <end position="321"/>
    </location>
</feature>
<feature type="region of interest" description="Disordered" evidence="3">
    <location>
        <begin position="338"/>
        <end position="363"/>
    </location>
</feature>
<feature type="compositionally biased region" description="Basic and acidic residues" evidence="3">
    <location>
        <begin position="312"/>
        <end position="321"/>
    </location>
</feature>
<feature type="compositionally biased region" description="Low complexity" evidence="3">
    <location>
        <begin position="342"/>
        <end position="351"/>
    </location>
</feature>
<feature type="active site" description="Proton acceptor" evidence="1 2">
    <location>
        <position position="144"/>
    </location>
</feature>
<feature type="binding site" evidence="1">
    <location>
        <begin position="25"/>
        <end position="33"/>
    </location>
    <ligand>
        <name>ATP</name>
        <dbReference type="ChEBI" id="CHEBI:30616"/>
    </ligand>
</feature>
<feature type="binding site" evidence="1">
    <location>
        <position position="48"/>
    </location>
    <ligand>
        <name>ATP</name>
        <dbReference type="ChEBI" id="CHEBI:30616"/>
    </ligand>
</feature>
<feature type="sequence conflict" description="In Ref. 4; AAL32528." evidence="4" ref="4">
    <original>Y</original>
    <variation>H</variation>
    <location>
        <position position="195"/>
    </location>
</feature>
<evidence type="ECO:0000255" key="1">
    <source>
        <dbReference type="PROSITE-ProRule" id="PRU00159"/>
    </source>
</evidence>
<evidence type="ECO:0000255" key="2">
    <source>
        <dbReference type="PROSITE-ProRule" id="PRU10028"/>
    </source>
</evidence>
<evidence type="ECO:0000256" key="3">
    <source>
        <dbReference type="SAM" id="MobiDB-lite"/>
    </source>
</evidence>
<evidence type="ECO:0000305" key="4"/>
<protein>
    <recommendedName>
        <fullName>Serine/threonine-protein kinase Nek7</fullName>
        <ecNumber>2.7.11.34</ecNumber>
    </recommendedName>
    <alternativeName>
        <fullName>NimA-related protein kinase 7</fullName>
        <shortName>AtNek7</shortName>
    </alternativeName>
</protein>
<organism>
    <name type="scientific">Arabidopsis thaliana</name>
    <name type="common">Mouse-ear cress</name>
    <dbReference type="NCBI Taxonomy" id="3702"/>
    <lineage>
        <taxon>Eukaryota</taxon>
        <taxon>Viridiplantae</taxon>
        <taxon>Streptophyta</taxon>
        <taxon>Embryophyta</taxon>
        <taxon>Tracheophyta</taxon>
        <taxon>Spermatophyta</taxon>
        <taxon>Magnoliopsida</taxon>
        <taxon>eudicotyledons</taxon>
        <taxon>Gunneridae</taxon>
        <taxon>Pentapetalae</taxon>
        <taxon>rosids</taxon>
        <taxon>malvids</taxon>
        <taxon>Brassicales</taxon>
        <taxon>Brassicaceae</taxon>
        <taxon>Camelineae</taxon>
        <taxon>Arabidopsis</taxon>
    </lineage>
</organism>
<comment type="function">
    <text>May be involved in plant development processes.</text>
</comment>
<comment type="catalytic activity">
    <reaction>
        <text>L-seryl-[protein] + ATP = O-phospho-L-seryl-[protein] + ADP + H(+)</text>
        <dbReference type="Rhea" id="RHEA:17989"/>
        <dbReference type="Rhea" id="RHEA-COMP:9863"/>
        <dbReference type="Rhea" id="RHEA-COMP:11604"/>
        <dbReference type="ChEBI" id="CHEBI:15378"/>
        <dbReference type="ChEBI" id="CHEBI:29999"/>
        <dbReference type="ChEBI" id="CHEBI:30616"/>
        <dbReference type="ChEBI" id="CHEBI:83421"/>
        <dbReference type="ChEBI" id="CHEBI:456216"/>
        <dbReference type="EC" id="2.7.11.34"/>
    </reaction>
</comment>
<comment type="catalytic activity">
    <reaction>
        <text>L-threonyl-[protein] + ATP = O-phospho-L-threonyl-[protein] + ADP + H(+)</text>
        <dbReference type="Rhea" id="RHEA:46608"/>
        <dbReference type="Rhea" id="RHEA-COMP:11060"/>
        <dbReference type="Rhea" id="RHEA-COMP:11605"/>
        <dbReference type="ChEBI" id="CHEBI:15378"/>
        <dbReference type="ChEBI" id="CHEBI:30013"/>
        <dbReference type="ChEBI" id="CHEBI:30616"/>
        <dbReference type="ChEBI" id="CHEBI:61977"/>
        <dbReference type="ChEBI" id="CHEBI:456216"/>
        <dbReference type="EC" id="2.7.11.34"/>
    </reaction>
</comment>
<comment type="alternative products">
    <event type="alternative splicing"/>
    <isoform>
        <id>Q9LHI7-1</id>
        <name>1</name>
        <sequence type="displayed"/>
    </isoform>
    <text>A number of isoforms are produced. According to EST sequences.</text>
</comment>
<comment type="similarity">
    <text evidence="4">Belongs to the protein kinase superfamily. NEK Ser/Thr protein kinase family. NIMA subfamily.</text>
</comment>
<gene>
    <name type="primary">NEK7</name>
    <name type="ordered locus">At3g12200</name>
    <name type="ORF">F28J15.17</name>
</gene>
<accession>Q9LHI7</accession>
<accession>Q8W4P0</accession>